<dbReference type="EC" id="1.3.1.98" evidence="1"/>
<dbReference type="EMBL" id="AE015927">
    <property type="protein sequence ID" value="AAO36959.1"/>
    <property type="molecule type" value="Genomic_DNA"/>
</dbReference>
<dbReference type="RefSeq" id="WP_011100620.1">
    <property type="nucleotide sequence ID" value="NC_004557.1"/>
</dbReference>
<dbReference type="SMR" id="Q890Y6"/>
<dbReference type="STRING" id="212717.CTC_02496"/>
<dbReference type="GeneID" id="24253911"/>
<dbReference type="KEGG" id="ctc:CTC_02496"/>
<dbReference type="HOGENOM" id="CLU_035304_1_1_9"/>
<dbReference type="OrthoDB" id="9804753at2"/>
<dbReference type="UniPathway" id="UPA00219"/>
<dbReference type="Proteomes" id="UP000001412">
    <property type="component" value="Chromosome"/>
</dbReference>
<dbReference type="GO" id="GO:0005829">
    <property type="term" value="C:cytosol"/>
    <property type="evidence" value="ECO:0007669"/>
    <property type="project" value="TreeGrafter"/>
</dbReference>
<dbReference type="GO" id="GO:0071949">
    <property type="term" value="F:FAD binding"/>
    <property type="evidence" value="ECO:0007669"/>
    <property type="project" value="InterPro"/>
</dbReference>
<dbReference type="GO" id="GO:0008762">
    <property type="term" value="F:UDP-N-acetylmuramate dehydrogenase activity"/>
    <property type="evidence" value="ECO:0007669"/>
    <property type="project" value="UniProtKB-UniRule"/>
</dbReference>
<dbReference type="GO" id="GO:0051301">
    <property type="term" value="P:cell division"/>
    <property type="evidence" value="ECO:0007669"/>
    <property type="project" value="UniProtKB-KW"/>
</dbReference>
<dbReference type="GO" id="GO:0071555">
    <property type="term" value="P:cell wall organization"/>
    <property type="evidence" value="ECO:0007669"/>
    <property type="project" value="UniProtKB-KW"/>
</dbReference>
<dbReference type="GO" id="GO:0009252">
    <property type="term" value="P:peptidoglycan biosynthetic process"/>
    <property type="evidence" value="ECO:0007669"/>
    <property type="project" value="UniProtKB-UniRule"/>
</dbReference>
<dbReference type="GO" id="GO:0008360">
    <property type="term" value="P:regulation of cell shape"/>
    <property type="evidence" value="ECO:0007669"/>
    <property type="project" value="UniProtKB-KW"/>
</dbReference>
<dbReference type="Gene3D" id="3.30.465.10">
    <property type="match status" value="1"/>
</dbReference>
<dbReference type="Gene3D" id="3.90.78.10">
    <property type="entry name" value="UDP-N-acetylenolpyruvoylglucosamine reductase, C-terminal domain"/>
    <property type="match status" value="1"/>
</dbReference>
<dbReference type="Gene3D" id="3.30.43.10">
    <property type="entry name" value="Uridine Diphospho-n-acetylenolpyruvylglucosamine Reductase, domain 2"/>
    <property type="match status" value="1"/>
</dbReference>
<dbReference type="HAMAP" id="MF_00037">
    <property type="entry name" value="MurB"/>
    <property type="match status" value="1"/>
</dbReference>
<dbReference type="InterPro" id="IPR016166">
    <property type="entry name" value="FAD-bd_PCMH"/>
</dbReference>
<dbReference type="InterPro" id="IPR036318">
    <property type="entry name" value="FAD-bd_PCMH-like_sf"/>
</dbReference>
<dbReference type="InterPro" id="IPR016167">
    <property type="entry name" value="FAD-bd_PCMH_sub1"/>
</dbReference>
<dbReference type="InterPro" id="IPR016169">
    <property type="entry name" value="FAD-bd_PCMH_sub2"/>
</dbReference>
<dbReference type="InterPro" id="IPR003170">
    <property type="entry name" value="MurB"/>
</dbReference>
<dbReference type="InterPro" id="IPR011601">
    <property type="entry name" value="MurB_C"/>
</dbReference>
<dbReference type="InterPro" id="IPR036635">
    <property type="entry name" value="MurB_C_sf"/>
</dbReference>
<dbReference type="InterPro" id="IPR006094">
    <property type="entry name" value="Oxid_FAD_bind_N"/>
</dbReference>
<dbReference type="NCBIfam" id="TIGR00179">
    <property type="entry name" value="murB"/>
    <property type="match status" value="1"/>
</dbReference>
<dbReference type="NCBIfam" id="NF010480">
    <property type="entry name" value="PRK13905.1"/>
    <property type="match status" value="1"/>
</dbReference>
<dbReference type="PANTHER" id="PTHR21071">
    <property type="entry name" value="UDP-N-ACETYLENOLPYRUVOYLGLUCOSAMINE REDUCTASE"/>
    <property type="match status" value="1"/>
</dbReference>
<dbReference type="PANTHER" id="PTHR21071:SF4">
    <property type="entry name" value="UDP-N-ACETYLENOLPYRUVOYLGLUCOSAMINE REDUCTASE"/>
    <property type="match status" value="1"/>
</dbReference>
<dbReference type="Pfam" id="PF01565">
    <property type="entry name" value="FAD_binding_4"/>
    <property type="match status" value="1"/>
</dbReference>
<dbReference type="Pfam" id="PF02873">
    <property type="entry name" value="MurB_C"/>
    <property type="match status" value="1"/>
</dbReference>
<dbReference type="SUPFAM" id="SSF56176">
    <property type="entry name" value="FAD-binding/transporter-associated domain-like"/>
    <property type="match status" value="1"/>
</dbReference>
<dbReference type="SUPFAM" id="SSF56194">
    <property type="entry name" value="Uridine diphospho-N-Acetylenolpyruvylglucosamine reductase, MurB, C-terminal domain"/>
    <property type="match status" value="1"/>
</dbReference>
<dbReference type="PROSITE" id="PS51387">
    <property type="entry name" value="FAD_PCMH"/>
    <property type="match status" value="1"/>
</dbReference>
<name>MURB_CLOTE</name>
<comment type="function">
    <text evidence="1">Cell wall formation.</text>
</comment>
<comment type="catalytic activity">
    <reaction evidence="1">
        <text>UDP-N-acetyl-alpha-D-muramate + NADP(+) = UDP-N-acetyl-3-O-(1-carboxyvinyl)-alpha-D-glucosamine + NADPH + H(+)</text>
        <dbReference type="Rhea" id="RHEA:12248"/>
        <dbReference type="ChEBI" id="CHEBI:15378"/>
        <dbReference type="ChEBI" id="CHEBI:57783"/>
        <dbReference type="ChEBI" id="CHEBI:58349"/>
        <dbReference type="ChEBI" id="CHEBI:68483"/>
        <dbReference type="ChEBI" id="CHEBI:70757"/>
        <dbReference type="EC" id="1.3.1.98"/>
    </reaction>
</comment>
<comment type="cofactor">
    <cofactor evidence="1">
        <name>FAD</name>
        <dbReference type="ChEBI" id="CHEBI:57692"/>
    </cofactor>
</comment>
<comment type="pathway">
    <text evidence="1">Cell wall biogenesis; peptidoglycan biosynthesis.</text>
</comment>
<comment type="subcellular location">
    <subcellularLocation>
        <location evidence="1">Cytoplasm</location>
    </subcellularLocation>
</comment>
<comment type="similarity">
    <text evidence="1">Belongs to the MurB family.</text>
</comment>
<keyword id="KW-0131">Cell cycle</keyword>
<keyword id="KW-0132">Cell division</keyword>
<keyword id="KW-0133">Cell shape</keyword>
<keyword id="KW-0961">Cell wall biogenesis/degradation</keyword>
<keyword id="KW-0963">Cytoplasm</keyword>
<keyword id="KW-0274">FAD</keyword>
<keyword id="KW-0285">Flavoprotein</keyword>
<keyword id="KW-0521">NADP</keyword>
<keyword id="KW-0560">Oxidoreductase</keyword>
<keyword id="KW-0573">Peptidoglycan synthesis</keyword>
<keyword id="KW-1185">Reference proteome</keyword>
<feature type="chain" id="PRO_0000179201" description="UDP-N-acetylenolpyruvoylglucosamine reductase">
    <location>
        <begin position="1"/>
        <end position="307"/>
    </location>
</feature>
<feature type="domain" description="FAD-binding PCMH-type" evidence="1">
    <location>
        <begin position="33"/>
        <end position="198"/>
    </location>
</feature>
<feature type="active site" evidence="1">
    <location>
        <position position="177"/>
    </location>
</feature>
<feature type="active site" description="Proton donor" evidence="1">
    <location>
        <position position="227"/>
    </location>
</feature>
<feature type="active site" evidence="1">
    <location>
        <position position="297"/>
    </location>
</feature>
<proteinExistence type="inferred from homology"/>
<organism>
    <name type="scientific">Clostridium tetani (strain Massachusetts / E88)</name>
    <dbReference type="NCBI Taxonomy" id="212717"/>
    <lineage>
        <taxon>Bacteria</taxon>
        <taxon>Bacillati</taxon>
        <taxon>Bacillota</taxon>
        <taxon>Clostridia</taxon>
        <taxon>Eubacteriales</taxon>
        <taxon>Clostridiaceae</taxon>
        <taxon>Clostridium</taxon>
    </lineage>
</organism>
<protein>
    <recommendedName>
        <fullName evidence="1">UDP-N-acetylenolpyruvoylglucosamine reductase</fullName>
        <ecNumber evidence="1">1.3.1.98</ecNumber>
    </recommendedName>
    <alternativeName>
        <fullName evidence="1">UDP-N-acetylmuramate dehydrogenase</fullName>
    </alternativeName>
</protein>
<evidence type="ECO:0000255" key="1">
    <source>
        <dbReference type="HAMAP-Rule" id="MF_00037"/>
    </source>
</evidence>
<accession>Q890Y6</accession>
<gene>
    <name evidence="1" type="primary">murB</name>
    <name type="ordered locus">CTC_02496</name>
</gene>
<sequence length="307" mass="33618">MNHYKDFISNLIENLGSENVKTNELMKNHTSFKVGGPVDILVTPESYEQVQYVIKHSRGNNIPYFIMGNGSNLLVRDGGIRGLVIKFCKLNRIKIEDDKIIAQSGVLLSKVSNMAAKNNLEGLEFASGIPGSIGGALTMNAGAYNGEISQVIDSALVLDKSGEILNLSKEELELGYRTSSILKNGYVVLEAILKLSLGDSKNIYDRIKELTEKRKTKQPLEYPSAGSTFKRPQGYFAAKLIEESGLKGINVGDAEVSQKHSGFIINKGNASAKDILNVINIVQDTVKSKFDVELHTEVLIIGEDKLN</sequence>
<reference key="1">
    <citation type="journal article" date="2003" name="Proc. Natl. Acad. Sci. U.S.A.">
        <title>The genome sequence of Clostridium tetani, the causative agent of tetanus disease.</title>
        <authorList>
            <person name="Brueggemann H."/>
            <person name="Baeumer S."/>
            <person name="Fricke W.F."/>
            <person name="Wiezer A."/>
            <person name="Liesegang H."/>
            <person name="Decker I."/>
            <person name="Herzberg C."/>
            <person name="Martinez-Arias R."/>
            <person name="Merkl R."/>
            <person name="Henne A."/>
            <person name="Gottschalk G."/>
        </authorList>
    </citation>
    <scope>NUCLEOTIDE SEQUENCE [LARGE SCALE GENOMIC DNA]</scope>
    <source>
        <strain>Massachusetts / E88</strain>
    </source>
</reference>